<name>Y4361_ARATH</name>
<comment type="catalytic activity">
    <reaction>
        <text>L-seryl-[protein] + ATP = O-phospho-L-seryl-[protein] + ADP + H(+)</text>
        <dbReference type="Rhea" id="RHEA:17989"/>
        <dbReference type="Rhea" id="RHEA-COMP:9863"/>
        <dbReference type="Rhea" id="RHEA-COMP:11604"/>
        <dbReference type="ChEBI" id="CHEBI:15378"/>
        <dbReference type="ChEBI" id="CHEBI:29999"/>
        <dbReference type="ChEBI" id="CHEBI:30616"/>
        <dbReference type="ChEBI" id="CHEBI:83421"/>
        <dbReference type="ChEBI" id="CHEBI:456216"/>
        <dbReference type="EC" id="2.7.11.1"/>
    </reaction>
</comment>
<comment type="catalytic activity">
    <reaction>
        <text>L-threonyl-[protein] + ATP = O-phospho-L-threonyl-[protein] + ADP + H(+)</text>
        <dbReference type="Rhea" id="RHEA:46608"/>
        <dbReference type="Rhea" id="RHEA-COMP:11060"/>
        <dbReference type="Rhea" id="RHEA-COMP:11605"/>
        <dbReference type="ChEBI" id="CHEBI:15378"/>
        <dbReference type="ChEBI" id="CHEBI:30013"/>
        <dbReference type="ChEBI" id="CHEBI:30616"/>
        <dbReference type="ChEBI" id="CHEBI:61977"/>
        <dbReference type="ChEBI" id="CHEBI:456216"/>
        <dbReference type="EC" id="2.7.11.1"/>
    </reaction>
</comment>
<comment type="interaction">
    <interactant intactId="EBI-16955302">
        <id>C0LGS2</id>
    </interactant>
    <interactant intactId="EBI-20654598">
        <id>F4I065</id>
        <label>At1g49100</label>
    </interactant>
    <organismsDiffer>false</organismsDiffer>
    <experiments>2</experiments>
</comment>
<comment type="interaction">
    <interactant intactId="EBI-16955302">
        <id>C0LGS2</id>
    </interactant>
    <interactant intactId="EBI-20651541">
        <id>C0LGJ9</id>
        <label>At2g02780</label>
    </interactant>
    <organismsDiffer>false</organismsDiffer>
    <experiments>2</experiments>
</comment>
<comment type="interaction">
    <interactant intactId="EBI-16955302">
        <id>C0LGS2</id>
    </interactant>
    <interactant intactId="EBI-16946048">
        <id>C0LGL4</id>
        <label>At2g28960</label>
    </interactant>
    <organismsDiffer>false</organismsDiffer>
    <experiments>2</experiments>
</comment>
<comment type="interaction">
    <interactant intactId="EBI-16955302">
        <id>C0LGS2</id>
    </interactant>
    <interactant intactId="EBI-16887698">
        <id>O81069</id>
        <label>At2g28990</label>
    </interactant>
    <organismsDiffer>false</organismsDiffer>
    <experiments>2</experiments>
</comment>
<comment type="subcellular location">
    <subcellularLocation>
        <location evidence="7">Cell membrane</location>
        <topology evidence="7">Single-pass type I membrane protein</topology>
    </subcellularLocation>
</comment>
<comment type="similarity">
    <text evidence="4">Belongs to the protein kinase superfamily. Ser/Thr protein kinase family.</text>
</comment>
<comment type="sequence caution" evidence="6">
    <conflict type="erroneous initiation">
        <sequence resource="EMBL-CDS" id="CAA18124"/>
    </conflict>
</comment>
<comment type="sequence caution" evidence="6">
    <conflict type="erroneous initiation">
        <sequence resource="EMBL-CDS" id="CAB81527"/>
    </conflict>
</comment>
<accession>C0LGS2</accession>
<accession>O65510</accession>
<accession>Q8RXY8</accession>
<protein>
    <recommendedName>
        <fullName>Probable LRR receptor-like serine/threonine-protein kinase At4g36180</fullName>
        <ecNumber>2.7.11.1</ecNumber>
    </recommendedName>
</protein>
<organism>
    <name type="scientific">Arabidopsis thaliana</name>
    <name type="common">Mouse-ear cress</name>
    <dbReference type="NCBI Taxonomy" id="3702"/>
    <lineage>
        <taxon>Eukaryota</taxon>
        <taxon>Viridiplantae</taxon>
        <taxon>Streptophyta</taxon>
        <taxon>Embryophyta</taxon>
        <taxon>Tracheophyta</taxon>
        <taxon>Spermatophyta</taxon>
        <taxon>Magnoliopsida</taxon>
        <taxon>eudicotyledons</taxon>
        <taxon>Gunneridae</taxon>
        <taxon>Pentapetalae</taxon>
        <taxon>rosids</taxon>
        <taxon>malvids</taxon>
        <taxon>Brassicales</taxon>
        <taxon>Brassicaceae</taxon>
        <taxon>Camelineae</taxon>
        <taxon>Arabidopsis</taxon>
    </lineage>
</organism>
<keyword id="KW-0067">ATP-binding</keyword>
<keyword id="KW-1003">Cell membrane</keyword>
<keyword id="KW-0325">Glycoprotein</keyword>
<keyword id="KW-0418">Kinase</keyword>
<keyword id="KW-0433">Leucine-rich repeat</keyword>
<keyword id="KW-0472">Membrane</keyword>
<keyword id="KW-0547">Nucleotide-binding</keyword>
<keyword id="KW-0597">Phosphoprotein</keyword>
<keyword id="KW-0675">Receptor</keyword>
<keyword id="KW-1185">Reference proteome</keyword>
<keyword id="KW-0677">Repeat</keyword>
<keyword id="KW-0723">Serine/threonine-protein kinase</keyword>
<keyword id="KW-0732">Signal</keyword>
<keyword id="KW-0808">Transferase</keyword>
<keyword id="KW-0812">Transmembrane</keyword>
<keyword id="KW-1133">Transmembrane helix</keyword>
<reference key="1">
    <citation type="journal article" date="1999" name="Nature">
        <title>Sequence and analysis of chromosome 4 of the plant Arabidopsis thaliana.</title>
        <authorList>
            <person name="Mayer K.F.X."/>
            <person name="Schueller C."/>
            <person name="Wambutt R."/>
            <person name="Murphy G."/>
            <person name="Volckaert G."/>
            <person name="Pohl T."/>
            <person name="Duesterhoeft A."/>
            <person name="Stiekema W."/>
            <person name="Entian K.-D."/>
            <person name="Terryn N."/>
            <person name="Harris B."/>
            <person name="Ansorge W."/>
            <person name="Brandt P."/>
            <person name="Grivell L.A."/>
            <person name="Rieger M."/>
            <person name="Weichselgartner M."/>
            <person name="de Simone V."/>
            <person name="Obermaier B."/>
            <person name="Mache R."/>
            <person name="Mueller M."/>
            <person name="Kreis M."/>
            <person name="Delseny M."/>
            <person name="Puigdomenech P."/>
            <person name="Watson M."/>
            <person name="Schmidtheini T."/>
            <person name="Reichert B."/>
            <person name="Portetelle D."/>
            <person name="Perez-Alonso M."/>
            <person name="Boutry M."/>
            <person name="Bancroft I."/>
            <person name="Vos P."/>
            <person name="Hoheisel J."/>
            <person name="Zimmermann W."/>
            <person name="Wedler H."/>
            <person name="Ridley P."/>
            <person name="Langham S.-A."/>
            <person name="McCullagh B."/>
            <person name="Bilham L."/>
            <person name="Robben J."/>
            <person name="van der Schueren J."/>
            <person name="Grymonprez B."/>
            <person name="Chuang Y.-J."/>
            <person name="Vandenbussche F."/>
            <person name="Braeken M."/>
            <person name="Weltjens I."/>
            <person name="Voet M."/>
            <person name="Bastiaens I."/>
            <person name="Aert R."/>
            <person name="Defoor E."/>
            <person name="Weitzenegger T."/>
            <person name="Bothe G."/>
            <person name="Ramsperger U."/>
            <person name="Hilbert H."/>
            <person name="Braun M."/>
            <person name="Holzer E."/>
            <person name="Brandt A."/>
            <person name="Peters S."/>
            <person name="van Staveren M."/>
            <person name="Dirkse W."/>
            <person name="Mooijman P."/>
            <person name="Klein Lankhorst R."/>
            <person name="Rose M."/>
            <person name="Hauf J."/>
            <person name="Koetter P."/>
            <person name="Berneiser S."/>
            <person name="Hempel S."/>
            <person name="Feldpausch M."/>
            <person name="Lamberth S."/>
            <person name="Van den Daele H."/>
            <person name="De Keyser A."/>
            <person name="Buysshaert C."/>
            <person name="Gielen J."/>
            <person name="Villarroel R."/>
            <person name="De Clercq R."/>
            <person name="van Montagu M."/>
            <person name="Rogers J."/>
            <person name="Cronin A."/>
            <person name="Quail M.A."/>
            <person name="Bray-Allen S."/>
            <person name="Clark L."/>
            <person name="Doggett J."/>
            <person name="Hall S."/>
            <person name="Kay M."/>
            <person name="Lennard N."/>
            <person name="McLay K."/>
            <person name="Mayes R."/>
            <person name="Pettett A."/>
            <person name="Rajandream M.A."/>
            <person name="Lyne M."/>
            <person name="Benes V."/>
            <person name="Rechmann S."/>
            <person name="Borkova D."/>
            <person name="Bloecker H."/>
            <person name="Scharfe M."/>
            <person name="Grimm M."/>
            <person name="Loehnert T.-H."/>
            <person name="Dose S."/>
            <person name="de Haan M."/>
            <person name="Maarse A.C."/>
            <person name="Schaefer M."/>
            <person name="Mueller-Auer S."/>
            <person name="Gabel C."/>
            <person name="Fuchs M."/>
            <person name="Fartmann B."/>
            <person name="Granderath K."/>
            <person name="Dauner D."/>
            <person name="Herzl A."/>
            <person name="Neumann S."/>
            <person name="Argiriou A."/>
            <person name="Vitale D."/>
            <person name="Liguori R."/>
            <person name="Piravandi E."/>
            <person name="Massenet O."/>
            <person name="Quigley F."/>
            <person name="Clabauld G."/>
            <person name="Muendlein A."/>
            <person name="Felber R."/>
            <person name="Schnabl S."/>
            <person name="Hiller R."/>
            <person name="Schmidt W."/>
            <person name="Lecharny A."/>
            <person name="Aubourg S."/>
            <person name="Chefdor F."/>
            <person name="Cooke R."/>
            <person name="Berger C."/>
            <person name="Monfort A."/>
            <person name="Casacuberta E."/>
            <person name="Gibbons T."/>
            <person name="Weber N."/>
            <person name="Vandenbol M."/>
            <person name="Bargues M."/>
            <person name="Terol J."/>
            <person name="Torres A."/>
            <person name="Perez-Perez A."/>
            <person name="Purnelle B."/>
            <person name="Bent E."/>
            <person name="Johnson S."/>
            <person name="Tacon D."/>
            <person name="Jesse T."/>
            <person name="Heijnen L."/>
            <person name="Schwarz S."/>
            <person name="Scholler P."/>
            <person name="Heber S."/>
            <person name="Francs P."/>
            <person name="Bielke C."/>
            <person name="Frishman D."/>
            <person name="Haase D."/>
            <person name="Lemcke K."/>
            <person name="Mewes H.-W."/>
            <person name="Stocker S."/>
            <person name="Zaccaria P."/>
            <person name="Bevan M."/>
            <person name="Wilson R.K."/>
            <person name="de la Bastide M."/>
            <person name="Habermann K."/>
            <person name="Parnell L."/>
            <person name="Dedhia N."/>
            <person name="Gnoj L."/>
            <person name="Schutz K."/>
            <person name="Huang E."/>
            <person name="Spiegel L."/>
            <person name="Sekhon M."/>
            <person name="Murray J."/>
            <person name="Sheet P."/>
            <person name="Cordes M."/>
            <person name="Abu-Threideh J."/>
            <person name="Stoneking T."/>
            <person name="Kalicki J."/>
            <person name="Graves T."/>
            <person name="Harmon G."/>
            <person name="Edwards J."/>
            <person name="Latreille P."/>
            <person name="Courtney L."/>
            <person name="Cloud J."/>
            <person name="Abbott A."/>
            <person name="Scott K."/>
            <person name="Johnson D."/>
            <person name="Minx P."/>
            <person name="Bentley D."/>
            <person name="Fulton B."/>
            <person name="Miller N."/>
            <person name="Greco T."/>
            <person name="Kemp K."/>
            <person name="Kramer J."/>
            <person name="Fulton L."/>
            <person name="Mardis E."/>
            <person name="Dante M."/>
            <person name="Pepin K."/>
            <person name="Hillier L.W."/>
            <person name="Nelson J."/>
            <person name="Spieth J."/>
            <person name="Ryan E."/>
            <person name="Andrews S."/>
            <person name="Geisel C."/>
            <person name="Layman D."/>
            <person name="Du H."/>
            <person name="Ali J."/>
            <person name="Berghoff A."/>
            <person name="Jones K."/>
            <person name="Drone K."/>
            <person name="Cotton M."/>
            <person name="Joshu C."/>
            <person name="Antonoiu B."/>
            <person name="Zidanic M."/>
            <person name="Strong C."/>
            <person name="Sun H."/>
            <person name="Lamar B."/>
            <person name="Yordan C."/>
            <person name="Ma P."/>
            <person name="Zhong J."/>
            <person name="Preston R."/>
            <person name="Vil D."/>
            <person name="Shekher M."/>
            <person name="Matero A."/>
            <person name="Shah R."/>
            <person name="Swaby I.K."/>
            <person name="O'Shaughnessy A."/>
            <person name="Rodriguez M."/>
            <person name="Hoffman J."/>
            <person name="Till S."/>
            <person name="Granat S."/>
            <person name="Shohdy N."/>
            <person name="Hasegawa A."/>
            <person name="Hameed A."/>
            <person name="Lodhi M."/>
            <person name="Johnson A."/>
            <person name="Chen E."/>
            <person name="Marra M.A."/>
            <person name="Martienssen R."/>
            <person name="McCombie W.R."/>
        </authorList>
    </citation>
    <scope>NUCLEOTIDE SEQUENCE [LARGE SCALE GENOMIC DNA]</scope>
    <source>
        <strain>cv. Columbia</strain>
    </source>
</reference>
<reference key="2">
    <citation type="journal article" date="2017" name="Plant J.">
        <title>Araport11: a complete reannotation of the Arabidopsis thaliana reference genome.</title>
        <authorList>
            <person name="Cheng C.Y."/>
            <person name="Krishnakumar V."/>
            <person name="Chan A.P."/>
            <person name="Thibaud-Nissen F."/>
            <person name="Schobel S."/>
            <person name="Town C.D."/>
        </authorList>
    </citation>
    <scope>GENOME REANNOTATION</scope>
    <source>
        <strain>cv. Columbia</strain>
    </source>
</reference>
<reference key="3">
    <citation type="journal article" date="2010" name="BMC Genomics">
        <title>Genome-wide cloning and sequence analysis of leucine-rich repeat receptor-like protein kinase genes in Arabidopsis thaliana.</title>
        <authorList>
            <person name="Gou X."/>
            <person name="He K."/>
            <person name="Yang H."/>
            <person name="Yuan T."/>
            <person name="Lin H."/>
            <person name="Clouse S.D."/>
            <person name="Li J."/>
        </authorList>
    </citation>
    <scope>NUCLEOTIDE SEQUENCE [LARGE SCALE MRNA]</scope>
    <source>
        <strain>cv. Columbia</strain>
    </source>
</reference>
<reference key="4">
    <citation type="journal article" date="2003" name="Science">
        <title>Empirical analysis of transcriptional activity in the Arabidopsis genome.</title>
        <authorList>
            <person name="Yamada K."/>
            <person name="Lim J."/>
            <person name="Dale J.M."/>
            <person name="Chen H."/>
            <person name="Shinn P."/>
            <person name="Palm C.J."/>
            <person name="Southwick A.M."/>
            <person name="Wu H.C."/>
            <person name="Kim C.J."/>
            <person name="Nguyen M."/>
            <person name="Pham P.K."/>
            <person name="Cheuk R.F."/>
            <person name="Karlin-Newmann G."/>
            <person name="Liu S.X."/>
            <person name="Lam B."/>
            <person name="Sakano H."/>
            <person name="Wu T."/>
            <person name="Yu G."/>
            <person name="Miranda M."/>
            <person name="Quach H.L."/>
            <person name="Tripp M."/>
            <person name="Chang C.H."/>
            <person name="Lee J.M."/>
            <person name="Toriumi M.J."/>
            <person name="Chan M.M."/>
            <person name="Tang C.C."/>
            <person name="Onodera C.S."/>
            <person name="Deng J.M."/>
            <person name="Akiyama K."/>
            <person name="Ansari Y."/>
            <person name="Arakawa T."/>
            <person name="Banh J."/>
            <person name="Banno F."/>
            <person name="Bowser L."/>
            <person name="Brooks S.Y."/>
            <person name="Carninci P."/>
            <person name="Chao Q."/>
            <person name="Choy N."/>
            <person name="Enju A."/>
            <person name="Goldsmith A.D."/>
            <person name="Gurjal M."/>
            <person name="Hansen N.F."/>
            <person name="Hayashizaki Y."/>
            <person name="Johnson-Hopson C."/>
            <person name="Hsuan V.W."/>
            <person name="Iida K."/>
            <person name="Karnes M."/>
            <person name="Khan S."/>
            <person name="Koesema E."/>
            <person name="Ishida J."/>
            <person name="Jiang P.X."/>
            <person name="Jones T."/>
            <person name="Kawai J."/>
            <person name="Kamiya A."/>
            <person name="Meyers C."/>
            <person name="Nakajima M."/>
            <person name="Narusaka M."/>
            <person name="Seki M."/>
            <person name="Sakurai T."/>
            <person name="Satou M."/>
            <person name="Tamse R."/>
            <person name="Vaysberg M."/>
            <person name="Wallender E.K."/>
            <person name="Wong C."/>
            <person name="Yamamura Y."/>
            <person name="Yuan S."/>
            <person name="Shinozaki K."/>
            <person name="Davis R.W."/>
            <person name="Theologis A."/>
            <person name="Ecker J.R."/>
        </authorList>
    </citation>
    <scope>NUCLEOTIDE SEQUENCE [LARGE SCALE MRNA] OF 730-1136</scope>
    <source>
        <strain>cv. Columbia</strain>
    </source>
</reference>
<reference key="5">
    <citation type="journal article" date="2007" name="Mol. Cell. Proteomics">
        <title>A high content in lipid-modified peripheral proteins and integral receptor kinases features in the arabidopsis plasma membrane proteome.</title>
        <authorList>
            <person name="Marmagne A."/>
            <person name="Ferro M."/>
            <person name="Meinnel T."/>
            <person name="Bruley C."/>
            <person name="Kuhn L."/>
            <person name="Garin J."/>
            <person name="Barbier-Brygoo H."/>
            <person name="Ephritikhine G."/>
        </authorList>
    </citation>
    <scope>IDENTIFICATION BY MASS SPECTROMETRY</scope>
    <scope>SUBCELLULAR LOCATION</scope>
</reference>
<dbReference type="EC" id="2.7.11.1"/>
<dbReference type="EMBL" id="AL022141">
    <property type="protein sequence ID" value="CAA18124.1"/>
    <property type="status" value="ALT_INIT"/>
    <property type="molecule type" value="Genomic_DNA"/>
</dbReference>
<dbReference type="EMBL" id="AL161588">
    <property type="protein sequence ID" value="CAB81527.1"/>
    <property type="status" value="ALT_INIT"/>
    <property type="molecule type" value="Genomic_DNA"/>
</dbReference>
<dbReference type="EMBL" id="CP002687">
    <property type="protein sequence ID" value="AEE86628.1"/>
    <property type="molecule type" value="Genomic_DNA"/>
</dbReference>
<dbReference type="EMBL" id="FJ708764">
    <property type="protein sequence ID" value="ACN59357.1"/>
    <property type="molecule type" value="mRNA"/>
</dbReference>
<dbReference type="EMBL" id="AY080606">
    <property type="protein sequence ID" value="AAL86290.1"/>
    <property type="molecule type" value="mRNA"/>
</dbReference>
<dbReference type="PIR" id="T04587">
    <property type="entry name" value="T04587"/>
</dbReference>
<dbReference type="RefSeq" id="NP_195341.2">
    <property type="nucleotide sequence ID" value="NM_119785.4"/>
</dbReference>
<dbReference type="SMR" id="C0LGS2"/>
<dbReference type="BioGRID" id="15057">
    <property type="interactions" value="37"/>
</dbReference>
<dbReference type="FunCoup" id="C0LGS2">
    <property type="interactions" value="1133"/>
</dbReference>
<dbReference type="IntAct" id="C0LGS2">
    <property type="interactions" value="40"/>
</dbReference>
<dbReference type="STRING" id="3702.C0LGS2"/>
<dbReference type="GlyGen" id="C0LGS2">
    <property type="glycosylation" value="22 sites"/>
</dbReference>
<dbReference type="iPTMnet" id="C0LGS2"/>
<dbReference type="PaxDb" id="3702-AT4G36180.1"/>
<dbReference type="ProteomicsDB" id="242369"/>
<dbReference type="EnsemblPlants" id="AT4G36180.1">
    <property type="protein sequence ID" value="AT4G36180.1"/>
    <property type="gene ID" value="AT4G36180"/>
</dbReference>
<dbReference type="GeneID" id="829775"/>
<dbReference type="Gramene" id="AT4G36180.1">
    <property type="protein sequence ID" value="AT4G36180.1"/>
    <property type="gene ID" value="AT4G36180"/>
</dbReference>
<dbReference type="KEGG" id="ath:AT4G36180"/>
<dbReference type="Araport" id="AT4G36180"/>
<dbReference type="TAIR" id="AT4G36180"/>
<dbReference type="eggNOG" id="ENOG502QTHE">
    <property type="taxonomic scope" value="Eukaryota"/>
</dbReference>
<dbReference type="HOGENOM" id="CLU_000288_22_1_1"/>
<dbReference type="InParanoid" id="C0LGS2"/>
<dbReference type="OMA" id="TNNRVTE"/>
<dbReference type="PhylomeDB" id="C0LGS2"/>
<dbReference type="PRO" id="PR:C0LGS2"/>
<dbReference type="Proteomes" id="UP000006548">
    <property type="component" value="Chromosome 4"/>
</dbReference>
<dbReference type="ExpressionAtlas" id="C0LGS2">
    <property type="expression patterns" value="baseline and differential"/>
</dbReference>
<dbReference type="GO" id="GO:0005886">
    <property type="term" value="C:plasma membrane"/>
    <property type="evidence" value="ECO:0007005"/>
    <property type="project" value="TAIR"/>
</dbReference>
<dbReference type="GO" id="GO:0090406">
    <property type="term" value="C:pollen tube"/>
    <property type="evidence" value="ECO:0000314"/>
    <property type="project" value="TAIR"/>
</dbReference>
<dbReference type="GO" id="GO:0005524">
    <property type="term" value="F:ATP binding"/>
    <property type="evidence" value="ECO:0007669"/>
    <property type="project" value="UniProtKB-KW"/>
</dbReference>
<dbReference type="GO" id="GO:0016301">
    <property type="term" value="F:kinase activity"/>
    <property type="evidence" value="ECO:0000314"/>
    <property type="project" value="TAIR"/>
</dbReference>
<dbReference type="GO" id="GO:0106310">
    <property type="term" value="F:protein serine kinase activity"/>
    <property type="evidence" value="ECO:0007669"/>
    <property type="project" value="RHEA"/>
</dbReference>
<dbReference type="GO" id="GO:0004674">
    <property type="term" value="F:protein serine/threonine kinase activity"/>
    <property type="evidence" value="ECO:0007669"/>
    <property type="project" value="UniProtKB-KW"/>
</dbReference>
<dbReference type="FunFam" id="3.80.10.10:FF:000041">
    <property type="entry name" value="LRR receptor-like serine/threonine-protein kinase ERECTA"/>
    <property type="match status" value="1"/>
</dbReference>
<dbReference type="FunFam" id="3.80.10.10:FF:000101">
    <property type="entry name" value="LRR receptor-like serine/threonine-protein kinase ERECTA"/>
    <property type="match status" value="1"/>
</dbReference>
<dbReference type="FunFam" id="3.80.10.10:FF:000095">
    <property type="entry name" value="LRR receptor-like serine/threonine-protein kinase GSO1"/>
    <property type="match status" value="1"/>
</dbReference>
<dbReference type="FunFam" id="1.10.510.10:FF:000192">
    <property type="entry name" value="LRR receptor-like serine/threonine-protein kinase RPK2"/>
    <property type="match status" value="1"/>
</dbReference>
<dbReference type="FunFam" id="3.80.10.10:FF:000299">
    <property type="entry name" value="Piriformospora indica-insensitive protein 2"/>
    <property type="match status" value="1"/>
</dbReference>
<dbReference type="FunFam" id="3.30.200.20:FF:000404">
    <property type="entry name" value="Putative LRR receptor-like serine/threonine-protein kinase"/>
    <property type="match status" value="1"/>
</dbReference>
<dbReference type="Gene3D" id="3.30.200.20">
    <property type="entry name" value="Phosphorylase Kinase, domain 1"/>
    <property type="match status" value="1"/>
</dbReference>
<dbReference type="Gene3D" id="3.80.10.10">
    <property type="entry name" value="Ribonuclease Inhibitor"/>
    <property type="match status" value="5"/>
</dbReference>
<dbReference type="Gene3D" id="1.10.510.10">
    <property type="entry name" value="Transferase(Phosphotransferase) domain 1"/>
    <property type="match status" value="1"/>
</dbReference>
<dbReference type="InterPro" id="IPR011009">
    <property type="entry name" value="Kinase-like_dom_sf"/>
</dbReference>
<dbReference type="InterPro" id="IPR001611">
    <property type="entry name" value="Leu-rich_rpt"/>
</dbReference>
<dbReference type="InterPro" id="IPR003591">
    <property type="entry name" value="Leu-rich_rpt_typical-subtyp"/>
</dbReference>
<dbReference type="InterPro" id="IPR032675">
    <property type="entry name" value="LRR_dom_sf"/>
</dbReference>
<dbReference type="InterPro" id="IPR013210">
    <property type="entry name" value="LRR_N_plant-typ"/>
</dbReference>
<dbReference type="InterPro" id="IPR000719">
    <property type="entry name" value="Prot_kinase_dom"/>
</dbReference>
<dbReference type="InterPro" id="IPR001245">
    <property type="entry name" value="Ser-Thr/Tyr_kinase_cat_dom"/>
</dbReference>
<dbReference type="InterPro" id="IPR008271">
    <property type="entry name" value="Ser/Thr_kinase_AS"/>
</dbReference>
<dbReference type="PANTHER" id="PTHR48052:SF63">
    <property type="entry name" value="PROTEIN KINASE DOMAIN-CONTAINING PROTEIN"/>
    <property type="match status" value="1"/>
</dbReference>
<dbReference type="PANTHER" id="PTHR48052">
    <property type="entry name" value="UNNAMED PRODUCT"/>
    <property type="match status" value="1"/>
</dbReference>
<dbReference type="Pfam" id="PF00560">
    <property type="entry name" value="LRR_1"/>
    <property type="match status" value="8"/>
</dbReference>
<dbReference type="Pfam" id="PF13855">
    <property type="entry name" value="LRR_8"/>
    <property type="match status" value="4"/>
</dbReference>
<dbReference type="Pfam" id="PF08263">
    <property type="entry name" value="LRRNT_2"/>
    <property type="match status" value="1"/>
</dbReference>
<dbReference type="Pfam" id="PF07714">
    <property type="entry name" value="PK_Tyr_Ser-Thr"/>
    <property type="match status" value="1"/>
</dbReference>
<dbReference type="SMART" id="SM00369">
    <property type="entry name" value="LRR_TYP"/>
    <property type="match status" value="13"/>
</dbReference>
<dbReference type="SMART" id="SM00220">
    <property type="entry name" value="S_TKc"/>
    <property type="match status" value="1"/>
</dbReference>
<dbReference type="SUPFAM" id="SSF52058">
    <property type="entry name" value="L domain-like"/>
    <property type="match status" value="3"/>
</dbReference>
<dbReference type="SUPFAM" id="SSF56112">
    <property type="entry name" value="Protein kinase-like (PK-like)"/>
    <property type="match status" value="1"/>
</dbReference>
<dbReference type="PROSITE" id="PS50011">
    <property type="entry name" value="PROTEIN_KINASE_DOM"/>
    <property type="match status" value="1"/>
</dbReference>
<dbReference type="PROSITE" id="PS00108">
    <property type="entry name" value="PROTEIN_KINASE_ST"/>
    <property type="match status" value="1"/>
</dbReference>
<gene>
    <name type="ordered locus">At4g36180</name>
    <name type="ORF">F23E13.70</name>
</gene>
<feature type="signal peptide" evidence="3">
    <location>
        <begin position="1"/>
        <end position="22"/>
    </location>
</feature>
<feature type="chain" id="PRO_0000387557" description="Probable LRR receptor-like serine/threonine-protein kinase At4g36180">
    <location>
        <begin position="23"/>
        <end position="1136"/>
    </location>
</feature>
<feature type="topological domain" description="Extracellular" evidence="3">
    <location>
        <begin position="23"/>
        <end position="751"/>
    </location>
</feature>
<feature type="transmembrane region" description="Helical" evidence="3">
    <location>
        <begin position="752"/>
        <end position="772"/>
    </location>
</feature>
<feature type="topological domain" description="Cytoplasmic" evidence="3">
    <location>
        <begin position="773"/>
        <end position="1136"/>
    </location>
</feature>
<feature type="repeat" description="LRR 1">
    <location>
        <begin position="93"/>
        <end position="115"/>
    </location>
</feature>
<feature type="repeat" description="LRR 2">
    <location>
        <begin position="117"/>
        <end position="139"/>
    </location>
</feature>
<feature type="repeat" description="LRR 3">
    <location>
        <begin position="141"/>
        <end position="162"/>
    </location>
</feature>
<feature type="repeat" description="LRR 4">
    <location>
        <begin position="163"/>
        <end position="186"/>
    </location>
</feature>
<feature type="repeat" description="LRR 5">
    <location>
        <begin position="187"/>
        <end position="210"/>
    </location>
</feature>
<feature type="repeat" description="LRR 6">
    <location>
        <begin position="211"/>
        <end position="233"/>
    </location>
</feature>
<feature type="repeat" description="LRR 7">
    <location>
        <begin position="235"/>
        <end position="256"/>
    </location>
</feature>
<feature type="repeat" description="LRR 8">
    <location>
        <begin position="259"/>
        <end position="280"/>
    </location>
</feature>
<feature type="repeat" description="LRR 9">
    <location>
        <begin position="283"/>
        <end position="304"/>
    </location>
</feature>
<feature type="repeat" description="LRR 10">
    <location>
        <begin position="309"/>
        <end position="330"/>
    </location>
</feature>
<feature type="repeat" description="LRR 11">
    <location>
        <begin position="333"/>
        <end position="355"/>
    </location>
</feature>
<feature type="repeat" description="LRR 12">
    <location>
        <begin position="357"/>
        <end position="379"/>
    </location>
</feature>
<feature type="repeat" description="LRR 13">
    <location>
        <begin position="381"/>
        <end position="403"/>
    </location>
</feature>
<feature type="repeat" description="LRR 14">
    <location>
        <begin position="405"/>
        <end position="426"/>
    </location>
</feature>
<feature type="repeat" description="LRR 15">
    <location>
        <begin position="429"/>
        <end position="452"/>
    </location>
</feature>
<feature type="repeat" description="LRR 16">
    <location>
        <begin position="453"/>
        <end position="479"/>
    </location>
</feature>
<feature type="repeat" description="LRR 17">
    <location>
        <begin position="480"/>
        <end position="500"/>
    </location>
</feature>
<feature type="repeat" description="LRR 18">
    <location>
        <begin position="501"/>
        <end position="524"/>
    </location>
</feature>
<feature type="repeat" description="LRR 19">
    <location>
        <begin position="525"/>
        <end position="546"/>
    </location>
</feature>
<feature type="repeat" description="LRR 30">
    <location>
        <begin position="549"/>
        <end position="571"/>
    </location>
</feature>
<feature type="repeat" description="LRR 21">
    <location>
        <begin position="573"/>
        <end position="595"/>
    </location>
</feature>
<feature type="repeat" description="LRR 22">
    <location>
        <begin position="597"/>
        <end position="620"/>
    </location>
</feature>
<feature type="repeat" description="LRR 23">
    <location>
        <begin position="621"/>
        <end position="643"/>
    </location>
</feature>
<feature type="repeat" description="LRR 24">
    <location>
        <begin position="645"/>
        <end position="666"/>
    </location>
</feature>
<feature type="repeat" description="LRR 25">
    <location>
        <begin position="669"/>
        <end position="691"/>
    </location>
</feature>
<feature type="repeat" description="LRR 26">
    <location>
        <begin position="694"/>
        <end position="716"/>
    </location>
</feature>
<feature type="domain" description="Protein kinase" evidence="4">
    <location>
        <begin position="841"/>
        <end position="1123"/>
    </location>
</feature>
<feature type="region of interest" description="Disordered" evidence="5">
    <location>
        <begin position="786"/>
        <end position="819"/>
    </location>
</feature>
<feature type="compositionally biased region" description="Low complexity" evidence="5">
    <location>
        <begin position="799"/>
        <end position="815"/>
    </location>
</feature>
<feature type="modified residue" description="Phosphothreonine" evidence="2">
    <location>
        <position position="830"/>
    </location>
</feature>
<feature type="modified residue" description="Phosphothreonine" evidence="2">
    <location>
        <position position="838"/>
    </location>
</feature>
<feature type="modified residue" description="Phosphotyrosine" evidence="2">
    <location>
        <position position="915"/>
    </location>
</feature>
<feature type="modified residue" description="Phosphotyrosine" evidence="1">
    <location>
        <position position="1010"/>
    </location>
</feature>
<feature type="glycosylation site" description="N-linked (GlcNAc...) asparagine" evidence="3">
    <location>
        <position position="105"/>
    </location>
</feature>
<feature type="glycosylation site" description="N-linked (GlcNAc...) asparagine" evidence="3">
    <location>
        <position position="138"/>
    </location>
</feature>
<feature type="glycosylation site" description="N-linked (GlcNAc...) asparagine" evidence="3">
    <location>
        <position position="184"/>
    </location>
</feature>
<feature type="glycosylation site" description="N-linked (GlcNAc...) asparagine" evidence="3">
    <location>
        <position position="192"/>
    </location>
</feature>
<feature type="glycosylation site" description="N-linked (GlcNAc...) asparagine" evidence="3">
    <location>
        <position position="232"/>
    </location>
</feature>
<feature type="glycosylation site" description="N-linked (GlcNAc...) asparagine" evidence="3">
    <location>
        <position position="269"/>
    </location>
</feature>
<feature type="glycosylation site" description="N-linked (GlcNAc...) asparagine" evidence="3">
    <location>
        <position position="281"/>
    </location>
</feature>
<feature type="glycosylation site" description="N-linked (GlcNAc...) asparagine" evidence="3">
    <location>
        <position position="365"/>
    </location>
</feature>
<feature type="glycosylation site" description="N-linked (GlcNAc...) asparagine" evidence="3">
    <location>
        <position position="441"/>
    </location>
</feature>
<feature type="glycosylation site" description="N-linked (GlcNAc...) asparagine" evidence="3">
    <location>
        <position position="474"/>
    </location>
</feature>
<feature type="glycosylation site" description="N-linked (GlcNAc...) asparagine" evidence="3">
    <location>
        <position position="477"/>
    </location>
</feature>
<feature type="glycosylation site" description="N-linked (GlcNAc...) asparagine" evidence="3">
    <location>
        <position position="482"/>
    </location>
</feature>
<feature type="glycosylation site" description="N-linked (GlcNAc...) asparagine" evidence="3">
    <location>
        <position position="511"/>
    </location>
</feature>
<feature type="glycosylation site" description="N-linked (GlcNAc...) asparagine" evidence="3">
    <location>
        <position position="535"/>
    </location>
</feature>
<feature type="glycosylation site" description="N-linked (GlcNAc...) asparagine" evidence="3">
    <location>
        <position position="554"/>
    </location>
</feature>
<feature type="glycosylation site" description="N-linked (GlcNAc...) asparagine" evidence="3">
    <location>
        <position position="594"/>
    </location>
</feature>
<feature type="glycosylation site" description="N-linked (GlcNAc...) asparagine" evidence="3">
    <location>
        <position position="631"/>
    </location>
</feature>
<feature type="glycosylation site" description="N-linked (GlcNAc...) asparagine" evidence="3">
    <location>
        <position position="669"/>
    </location>
</feature>
<feature type="glycosylation site" description="N-linked (GlcNAc...) asparagine" evidence="3">
    <location>
        <position position="679"/>
    </location>
</feature>
<feature type="glycosylation site" description="N-linked (GlcNAc...) asparagine" evidence="3">
    <location>
        <position position="699"/>
    </location>
</feature>
<feature type="glycosylation site" description="N-linked (GlcNAc...) asparagine" evidence="3">
    <location>
        <position position="719"/>
    </location>
</feature>
<proteinExistence type="evidence at protein level"/>
<evidence type="ECO:0000250" key="1">
    <source>
        <dbReference type="UniProtKB" id="C0LGT6"/>
    </source>
</evidence>
<evidence type="ECO:0000250" key="2">
    <source>
        <dbReference type="UniProtKB" id="O22476"/>
    </source>
</evidence>
<evidence type="ECO:0000255" key="3"/>
<evidence type="ECO:0000255" key="4">
    <source>
        <dbReference type="PROSITE-ProRule" id="PRU00159"/>
    </source>
</evidence>
<evidence type="ECO:0000256" key="5">
    <source>
        <dbReference type="SAM" id="MobiDB-lite"/>
    </source>
</evidence>
<evidence type="ECO:0000305" key="6"/>
<evidence type="ECO:0000305" key="7">
    <source>
    </source>
</evidence>
<sequence length="1136" mass="123664">MAMDISLFFIFLVIYAPLVSYADESQAEIDALTAFKLNLHDPLGALTSWDPSTPAAPCDWRGVGCTNHRVTEIRLPRLQLSGRISDRISGLRMLRKLSLRSNSFNGTIPTSLAYCTRLLSVFLQYNSLSGKLPPAMRNLTSLEVFNVAGNRLSGEIPVGLPSSLQFLDISSNTFSGQIPSGLANLTQLQLLNLSYNQLTGEIPASLGNLQSLQYLWLDFNLLQGTLPSAISNCSSLVHLSASENEIGGVIPAAYGALPKLEVLSLSNNNFSGTVPFSLFCNTSLTIVQLGFNAFSDIVRPETTANCRTGLQVLDLQENRISGRFPLWLTNILSLKNLDVSGNLFSGEIPPDIGNLKRLEELKLANNSLTGEIPVEIKQCGSLDVLDFEGNSLKGQIPEFLGYMKALKVLSLGRNSFSGYVPSSMVNLQQLERLNLGENNLNGSFPVELMALTSLSELDLSGNRFSGAVPVSISNLSNLSFLNLSGNGFSGEIPASVGNLFKLTALDLSKQNMSGEVPVELSGLPNVQVIALQGNNFSGVVPEGFSSLVSLRYVNLSSNSFSGEIPQTFGFLRLLVSLSLSDNHISGSIPPEIGNCSALEVLELRSNRLMGHIPADLSRLPRLKVLDLGQNNLSGEIPPEISQSSSLNSLSLDHNHLSGVIPGSFSGLSNLTKMDLSVNNLTGEIPASLALISSNLVYFNVSSNNLKGEIPASLGSRINNTSEFSGNTELCGKPLNRRCESSTAEGKKKKRKMILMIVMAAIGAFLLSLFCCFYVYTLLKWRKKLKQQSTTGEKKRSPGRTSAGSRVRSSTSRSSTENGEPKLVMFNNKITLAETIEATRQFDEENVLSRTRYGLLFKANYNDGMVLSIRRLPNGSLLNENLFKKEAEVLGKVKHRNITVLRGYYAGPPDLRLLVYDYMPNGNLSTLLQEASHQDGHVLNWPMRHLIALGIARGLGFLHQSNMVHGDIKPQNVLFDADFEAHISDFGLDRLTIRSPSRSAVTANTIGTLGYVSPEATLSGEITRESDIYSFGIVLLEILTGKRPVMFTQDEDIVKWVKKQLQRGQVTELLEPGLLELDPESSEWEEFLLGIKVGLLCTATDPLDRPTMSDVVFMLEGCRVGPDVPSSADPTSQPSPA</sequence>